<name>CAPP_BORPE</name>
<organism>
    <name type="scientific">Bordetella pertussis (strain Tohama I / ATCC BAA-589 / NCTC 13251)</name>
    <dbReference type="NCBI Taxonomy" id="257313"/>
    <lineage>
        <taxon>Bacteria</taxon>
        <taxon>Pseudomonadati</taxon>
        <taxon>Pseudomonadota</taxon>
        <taxon>Betaproteobacteria</taxon>
        <taxon>Burkholderiales</taxon>
        <taxon>Alcaligenaceae</taxon>
        <taxon>Bordetella</taxon>
    </lineage>
</organism>
<accession>Q7W0D0</accession>
<keyword id="KW-0120">Carbon dioxide fixation</keyword>
<keyword id="KW-0456">Lyase</keyword>
<keyword id="KW-0460">Magnesium</keyword>
<keyword id="KW-1185">Reference proteome</keyword>
<sequence>MAAYNAPVSNCQFRLTHILPIPQRHGAPTDPFQMNAIRQQSDSAEPLRHDIRLLGRCLGEVIQACEGKRVYDTIETLRRTAVRFRRAGDPADDKLLQARVKQLRGNDPNSVARAFSYFLHLSNIAEDRDQNRRQRERALAGAGPERGSLRQAIESLKAQGVNNARIRRLLSEACVMPVLTAHPTEVQRKSTLDVHREISSLLVQRERELTADELSELDLALIGQVATLWQTRMLRYTRLTVADEIENALSYYRSTFLNVIPRVYGDLARLLNREPVKPFTPPPPPLEPFLRMGSWIGGDRDGNPNVDAATLERALLRQATVLFEHYLQEVHALGAELSASTLLIEADPALLALADAGGDDSPHRRDEPYRRALIGIYARLAATARHLTGQKLARRATVPAAPYDTPDALAADLAVIAASLSARHGAPIARLRLSGLQQAVTVFGFHLATVDLRQSSDVHERVLAELFARAGDGIDGQAVDYLALDEAARVAGRELAHARPLASPWIAYSEETASELAVLRAAAAGRARYGRQAVLQSIVSHTETLSDLLEVLVLQKEAGLIAPPGETIAPGDGLMVVPLFETIPDLQRGPEIMAAWLDLPEVRQRVRLAQGDTQEVMLGYSDSNKDGGFLTSNWSLYQAERALVDVFSARSVRLRMFHGRGDSVGRGGGSSYDAILAQPPGTVAGQLRLTEQGEVIQSKYKDAEVGRWHLELLVAATLESSLAPQAAATSAEDAHMQQHAPAMSFMSELAQRTYRGLVYDTPGFADYFFAATPISEIAGLNIGSRPASRKKGQHIEDLRAIPWGFSWAQCRLMLTGWYGMGSAIEAYLETGAQGAPRSRRARLAQLREMASDWPAFRTLLSNMEMVLAKSDLAIAAGYAQLVPRRGLRERVFGAITAEHGRTLAMLRLLTRRDLLADNPGLMASLRERFAYIDPLNYLQIELIKRHRAAQRRAGDDADIRVPRAIHLTINGIAAGLRNSG</sequence>
<protein>
    <recommendedName>
        <fullName evidence="1">Phosphoenolpyruvate carboxylase</fullName>
        <shortName evidence="1">PEPC</shortName>
        <shortName evidence="1">PEPCase</shortName>
        <ecNumber evidence="1">4.1.1.31</ecNumber>
    </recommendedName>
</protein>
<dbReference type="EC" id="4.1.1.31" evidence="1"/>
<dbReference type="EMBL" id="BX640411">
    <property type="protein sequence ID" value="CAE40595.1"/>
    <property type="molecule type" value="Genomic_DNA"/>
</dbReference>
<dbReference type="RefSeq" id="NP_879103.1">
    <property type="nucleotide sequence ID" value="NC_002929.2"/>
</dbReference>
<dbReference type="RefSeq" id="WP_010929690.1">
    <property type="nucleotide sequence ID" value="NZ_CP039022.1"/>
</dbReference>
<dbReference type="SMR" id="Q7W0D0"/>
<dbReference type="STRING" id="257313.BP0215"/>
<dbReference type="PaxDb" id="257313-BP0215"/>
<dbReference type="GeneID" id="69603528"/>
<dbReference type="KEGG" id="bpe:BP0215"/>
<dbReference type="PATRIC" id="fig|257313.5.peg.232"/>
<dbReference type="eggNOG" id="COG2352">
    <property type="taxonomic scope" value="Bacteria"/>
</dbReference>
<dbReference type="HOGENOM" id="CLU_006557_2_0_4"/>
<dbReference type="Proteomes" id="UP000002676">
    <property type="component" value="Chromosome"/>
</dbReference>
<dbReference type="GO" id="GO:0005829">
    <property type="term" value="C:cytosol"/>
    <property type="evidence" value="ECO:0007669"/>
    <property type="project" value="TreeGrafter"/>
</dbReference>
<dbReference type="GO" id="GO:0000287">
    <property type="term" value="F:magnesium ion binding"/>
    <property type="evidence" value="ECO:0007669"/>
    <property type="project" value="UniProtKB-UniRule"/>
</dbReference>
<dbReference type="GO" id="GO:0008964">
    <property type="term" value="F:phosphoenolpyruvate carboxylase activity"/>
    <property type="evidence" value="ECO:0007669"/>
    <property type="project" value="UniProtKB-UniRule"/>
</dbReference>
<dbReference type="GO" id="GO:0015977">
    <property type="term" value="P:carbon fixation"/>
    <property type="evidence" value="ECO:0007669"/>
    <property type="project" value="UniProtKB-UniRule"/>
</dbReference>
<dbReference type="GO" id="GO:0006107">
    <property type="term" value="P:oxaloacetate metabolic process"/>
    <property type="evidence" value="ECO:0007669"/>
    <property type="project" value="UniProtKB-UniRule"/>
</dbReference>
<dbReference type="GO" id="GO:0006099">
    <property type="term" value="P:tricarboxylic acid cycle"/>
    <property type="evidence" value="ECO:0007669"/>
    <property type="project" value="InterPro"/>
</dbReference>
<dbReference type="Gene3D" id="1.20.1440.90">
    <property type="entry name" value="Phosphoenolpyruvate/pyruvate domain"/>
    <property type="match status" value="1"/>
</dbReference>
<dbReference type="HAMAP" id="MF_00595">
    <property type="entry name" value="PEPcase_type1"/>
    <property type="match status" value="1"/>
</dbReference>
<dbReference type="InterPro" id="IPR021135">
    <property type="entry name" value="PEP_COase"/>
</dbReference>
<dbReference type="InterPro" id="IPR022805">
    <property type="entry name" value="PEP_COase_bac/pln-type"/>
</dbReference>
<dbReference type="InterPro" id="IPR018129">
    <property type="entry name" value="PEP_COase_Lys_AS"/>
</dbReference>
<dbReference type="InterPro" id="IPR033129">
    <property type="entry name" value="PEPCASE_His_AS"/>
</dbReference>
<dbReference type="InterPro" id="IPR015813">
    <property type="entry name" value="Pyrv/PenolPyrv_kinase-like_dom"/>
</dbReference>
<dbReference type="NCBIfam" id="NF000584">
    <property type="entry name" value="PRK00009.1"/>
    <property type="match status" value="1"/>
</dbReference>
<dbReference type="PANTHER" id="PTHR30523">
    <property type="entry name" value="PHOSPHOENOLPYRUVATE CARBOXYLASE"/>
    <property type="match status" value="1"/>
</dbReference>
<dbReference type="PANTHER" id="PTHR30523:SF6">
    <property type="entry name" value="PHOSPHOENOLPYRUVATE CARBOXYLASE"/>
    <property type="match status" value="1"/>
</dbReference>
<dbReference type="Pfam" id="PF00311">
    <property type="entry name" value="PEPcase"/>
    <property type="match status" value="1"/>
</dbReference>
<dbReference type="PRINTS" id="PR00150">
    <property type="entry name" value="PEPCARBXLASE"/>
</dbReference>
<dbReference type="SUPFAM" id="SSF51621">
    <property type="entry name" value="Phosphoenolpyruvate/pyruvate domain"/>
    <property type="match status" value="1"/>
</dbReference>
<dbReference type="PROSITE" id="PS00781">
    <property type="entry name" value="PEPCASE_1"/>
    <property type="match status" value="1"/>
</dbReference>
<dbReference type="PROSITE" id="PS00393">
    <property type="entry name" value="PEPCASE_2"/>
    <property type="match status" value="1"/>
</dbReference>
<evidence type="ECO:0000255" key="1">
    <source>
        <dbReference type="HAMAP-Rule" id="MF_00595"/>
    </source>
</evidence>
<reference key="1">
    <citation type="journal article" date="2003" name="Nat. Genet.">
        <title>Comparative analysis of the genome sequences of Bordetella pertussis, Bordetella parapertussis and Bordetella bronchiseptica.</title>
        <authorList>
            <person name="Parkhill J."/>
            <person name="Sebaihia M."/>
            <person name="Preston A."/>
            <person name="Murphy L.D."/>
            <person name="Thomson N.R."/>
            <person name="Harris D.E."/>
            <person name="Holden M.T.G."/>
            <person name="Churcher C.M."/>
            <person name="Bentley S.D."/>
            <person name="Mungall K.L."/>
            <person name="Cerdeno-Tarraga A.-M."/>
            <person name="Temple L."/>
            <person name="James K.D."/>
            <person name="Harris B."/>
            <person name="Quail M.A."/>
            <person name="Achtman M."/>
            <person name="Atkin R."/>
            <person name="Baker S."/>
            <person name="Basham D."/>
            <person name="Bason N."/>
            <person name="Cherevach I."/>
            <person name="Chillingworth T."/>
            <person name="Collins M."/>
            <person name="Cronin A."/>
            <person name="Davis P."/>
            <person name="Doggett J."/>
            <person name="Feltwell T."/>
            <person name="Goble A."/>
            <person name="Hamlin N."/>
            <person name="Hauser H."/>
            <person name="Holroyd S."/>
            <person name="Jagels K."/>
            <person name="Leather S."/>
            <person name="Moule S."/>
            <person name="Norberczak H."/>
            <person name="O'Neil S."/>
            <person name="Ormond D."/>
            <person name="Price C."/>
            <person name="Rabbinowitsch E."/>
            <person name="Rutter S."/>
            <person name="Sanders M."/>
            <person name="Saunders D."/>
            <person name="Seeger K."/>
            <person name="Sharp S."/>
            <person name="Simmonds M."/>
            <person name="Skelton J."/>
            <person name="Squares R."/>
            <person name="Squares S."/>
            <person name="Stevens K."/>
            <person name="Unwin L."/>
            <person name="Whitehead S."/>
            <person name="Barrell B.G."/>
            <person name="Maskell D.J."/>
        </authorList>
    </citation>
    <scope>NUCLEOTIDE SEQUENCE [LARGE SCALE GENOMIC DNA]</scope>
    <source>
        <strain>Tohama I / ATCC BAA-589 / NCTC 13251</strain>
    </source>
</reference>
<gene>
    <name evidence="1" type="primary">ppc</name>
    <name type="ordered locus">BP0215</name>
</gene>
<feature type="chain" id="PRO_0000166582" description="Phosphoenolpyruvate carboxylase">
    <location>
        <begin position="1"/>
        <end position="980"/>
    </location>
</feature>
<feature type="active site" evidence="1">
    <location>
        <position position="182"/>
    </location>
</feature>
<feature type="active site" evidence="1">
    <location>
        <position position="625"/>
    </location>
</feature>
<comment type="function">
    <text evidence="1">Forms oxaloacetate, a four-carbon dicarboxylic acid source for the tricarboxylic acid cycle.</text>
</comment>
<comment type="catalytic activity">
    <reaction evidence="1">
        <text>oxaloacetate + phosphate = phosphoenolpyruvate + hydrogencarbonate</text>
        <dbReference type="Rhea" id="RHEA:28370"/>
        <dbReference type="ChEBI" id="CHEBI:16452"/>
        <dbReference type="ChEBI" id="CHEBI:17544"/>
        <dbReference type="ChEBI" id="CHEBI:43474"/>
        <dbReference type="ChEBI" id="CHEBI:58702"/>
        <dbReference type="EC" id="4.1.1.31"/>
    </reaction>
</comment>
<comment type="cofactor">
    <cofactor evidence="1">
        <name>Mg(2+)</name>
        <dbReference type="ChEBI" id="CHEBI:18420"/>
    </cofactor>
</comment>
<comment type="similarity">
    <text evidence="1">Belongs to the PEPCase type 1 family.</text>
</comment>
<proteinExistence type="inferred from homology"/>